<proteinExistence type="evidence at transcript level"/>
<name>NDR1A_XENLA</name>
<evidence type="ECO:0000255" key="1"/>
<evidence type="ECO:0000256" key="2">
    <source>
        <dbReference type="SAM" id="MobiDB-lite"/>
    </source>
</evidence>
<evidence type="ECO:0000269" key="3">
    <source>
    </source>
</evidence>
<evidence type="ECO:0000305" key="4"/>
<evidence type="ECO:0000312" key="5">
    <source>
        <dbReference type="EMBL" id="AAH82385.1"/>
    </source>
</evidence>
<keyword id="KW-0217">Developmental protein</keyword>
<keyword id="KW-1185">Reference proteome</keyword>
<keyword id="KW-0677">Repeat</keyword>
<protein>
    <recommendedName>
        <fullName>Protein NDRG1-A</fullName>
        <shortName>xNDRG1-A</shortName>
    </recommendedName>
</protein>
<accession>Q641F2</accession>
<reference evidence="5" key="1">
    <citation type="submission" date="2004-09" db="EMBL/GenBank/DDBJ databases">
        <authorList>
            <consortium name="NIH - Xenopus Gene Collection (XGC) project"/>
        </authorList>
    </citation>
    <scope>NUCLEOTIDE SEQUENCE [LARGE SCALE MRNA]</scope>
    <source>
        <tissue evidence="5">Kidney</tissue>
    </source>
</reference>
<reference evidence="4" key="2">
    <citation type="journal article" date="2003" name="Biochem. Biophys. Res. Commun.">
        <title>Identification and characterization of Xenopus NDRG1.</title>
        <authorList>
            <person name="Kyuno J."/>
            <person name="Fukui A."/>
            <person name="Michiue T."/>
            <person name="Asashima M."/>
        </authorList>
    </citation>
    <scope>NUCLEOTIDE SEQUENCE [MRNA] OF 49-396</scope>
    <scope>FUNCTION</scope>
    <scope>DEVELOPMENTAL STAGE</scope>
    <source>
        <tissue evidence="3">Kidney</tissue>
    </source>
</reference>
<comment type="function">
    <text evidence="3">May be involved in pronephros development, after specification of the pronephros.</text>
</comment>
<comment type="developmental stage">
    <text evidence="3">Zygotically expressed first at a low level at stage 15. Expression is markedly increased up to stage 20 after which time the level of expression remains stable. Expressed in the presumptive pronephric anlagen at stage 26. Localized to pronephros, eye, branchial arches and tail-bud in the early tadpole stage (stage 32).</text>
</comment>
<comment type="similarity">
    <text evidence="1">Belongs to the NDRG family.</text>
</comment>
<gene>
    <name type="primary">ndrg1-a</name>
</gene>
<organism>
    <name type="scientific">Xenopus laevis</name>
    <name type="common">African clawed frog</name>
    <dbReference type="NCBI Taxonomy" id="8355"/>
    <lineage>
        <taxon>Eukaryota</taxon>
        <taxon>Metazoa</taxon>
        <taxon>Chordata</taxon>
        <taxon>Craniata</taxon>
        <taxon>Vertebrata</taxon>
        <taxon>Euteleostomi</taxon>
        <taxon>Amphibia</taxon>
        <taxon>Batrachia</taxon>
        <taxon>Anura</taxon>
        <taxon>Pipoidea</taxon>
        <taxon>Pipidae</taxon>
        <taxon>Xenopodinae</taxon>
        <taxon>Xenopus</taxon>
        <taxon>Xenopus</taxon>
    </lineage>
</organism>
<feature type="chain" id="PRO_0000232425" description="Protein NDRG1-A">
    <location>
        <begin position="1"/>
        <end position="396"/>
    </location>
</feature>
<feature type="repeat" description="1" evidence="1">
    <location>
        <begin position="340"/>
        <end position="349"/>
    </location>
</feature>
<feature type="repeat" description="2" evidence="1">
    <location>
        <begin position="350"/>
        <end position="359"/>
    </location>
</feature>
<feature type="repeat" description="3" evidence="1">
    <location>
        <begin position="360"/>
        <end position="369"/>
    </location>
</feature>
<feature type="repeat" description="4" evidence="1">
    <location>
        <begin position="370"/>
        <end position="379"/>
    </location>
</feature>
<feature type="region of interest" description="Disordered" evidence="2">
    <location>
        <begin position="326"/>
        <end position="396"/>
    </location>
</feature>
<feature type="region of interest" description="4 X 10 AA tandem repeats of G-[NS]-R-S-R-[AS]-H-T-[DGN]-[DET]" evidence="1">
    <location>
        <begin position="340"/>
        <end position="379"/>
    </location>
</feature>
<feature type="compositionally biased region" description="Low complexity" evidence="2">
    <location>
        <begin position="327"/>
        <end position="340"/>
    </location>
</feature>
<feature type="compositionally biased region" description="Basic and acidic residues" evidence="2">
    <location>
        <begin position="346"/>
        <end position="377"/>
    </location>
</feature>
<feature type="compositionally biased region" description="Polar residues" evidence="2">
    <location>
        <begin position="378"/>
        <end position="390"/>
    </location>
</feature>
<feature type="sequence conflict" description="In Ref. 2." evidence="4" ref="2">
    <original>I</original>
    <variation>V</variation>
    <location>
        <position position="297"/>
    </location>
</feature>
<feature type="sequence conflict" description="In Ref. 2." evidence="4" ref="2">
    <original>S</original>
    <variation>T</variation>
    <location>
        <position position="335"/>
    </location>
</feature>
<dbReference type="EMBL" id="BC082385">
    <property type="protein sequence ID" value="AAH82385.1"/>
    <property type="molecule type" value="mRNA"/>
</dbReference>
<dbReference type="SMR" id="Q641F2"/>
<dbReference type="ESTHER" id="xenla-ndr1a">
    <property type="family name" value="Ndr_family"/>
</dbReference>
<dbReference type="DNASU" id="447720"/>
<dbReference type="GeneID" id="447720"/>
<dbReference type="KEGG" id="xla:447720"/>
<dbReference type="AGR" id="Xenbase:XB-GENE-6253402"/>
<dbReference type="CTD" id="447720"/>
<dbReference type="Xenbase" id="XB-GENE-6253402">
    <property type="gene designation" value="ndrg1.L"/>
</dbReference>
<dbReference type="OrthoDB" id="741027at2759"/>
<dbReference type="Proteomes" id="UP000186698">
    <property type="component" value="Chromosome 6L"/>
</dbReference>
<dbReference type="Bgee" id="447720">
    <property type="expression patterns" value="Expressed in intestine and 13 other cell types or tissues"/>
</dbReference>
<dbReference type="GO" id="GO:0005737">
    <property type="term" value="C:cytoplasm"/>
    <property type="evidence" value="ECO:0000318"/>
    <property type="project" value="GO_Central"/>
</dbReference>
<dbReference type="GO" id="GO:0048793">
    <property type="term" value="P:pronephros development"/>
    <property type="evidence" value="ECO:0000270"/>
    <property type="project" value="UniProtKB"/>
</dbReference>
<dbReference type="GO" id="GO:0007165">
    <property type="term" value="P:signal transduction"/>
    <property type="evidence" value="ECO:0000318"/>
    <property type="project" value="GO_Central"/>
</dbReference>
<dbReference type="FunFam" id="3.40.50.1820:FF:000006">
    <property type="entry name" value="NDRG family member 3"/>
    <property type="match status" value="1"/>
</dbReference>
<dbReference type="Gene3D" id="3.40.50.1820">
    <property type="entry name" value="alpha/beta hydrolase"/>
    <property type="match status" value="1"/>
</dbReference>
<dbReference type="InterPro" id="IPR029058">
    <property type="entry name" value="AB_hydrolase_fold"/>
</dbReference>
<dbReference type="InterPro" id="IPR004142">
    <property type="entry name" value="NDRG"/>
</dbReference>
<dbReference type="PANTHER" id="PTHR11034">
    <property type="entry name" value="N-MYC DOWNSTREAM REGULATED"/>
    <property type="match status" value="1"/>
</dbReference>
<dbReference type="Pfam" id="PF03096">
    <property type="entry name" value="Ndr"/>
    <property type="match status" value="1"/>
</dbReference>
<dbReference type="SUPFAM" id="SSF53474">
    <property type="entry name" value="alpha/beta-Hydrolases"/>
    <property type="match status" value="1"/>
</dbReference>
<sequence>MSAEMTDLNFAEGRPLMTDKEDGITVLLQEYVTQEHDIETAHGIVHVTMCGTPKLNRPVILTYHDIGLNHKTCFNSLFNFEDMHEISQHFSVCHVDAPGQQEGAASFPAGYMYPSMDQLAEMLPGVVQQLGLRTVMGLGIGAGAYILTRFALNHPSMVEGLVLININPCAEGWMDWAATKISGWTNALPDMVISHLFSKDEVHSNPELVETYRQHILHDINQNNVQHFVKSYNSRRDLEIERPIPGTNAVTLKCPALLVVGDSSPAVDAVVECNSKLDPTKTTLLKMSDCGGFPQVIQPAKLAEAFKYFVQGMGYMPAASMTRLMRSRTGSAASSSSQDGNRSRSHTNEGSRSRSHTGDGNRSRAHTGDGNRSRSHTDTNNINSDQNSPKSMEVSC</sequence>